<name>GLYA_DICT6</name>
<feature type="chain" id="PRO_1000091537" description="Serine hydroxymethyltransferase">
    <location>
        <begin position="1"/>
        <end position="414"/>
    </location>
</feature>
<feature type="binding site" evidence="1">
    <location>
        <position position="117"/>
    </location>
    <ligand>
        <name>(6S)-5,6,7,8-tetrahydrofolate</name>
        <dbReference type="ChEBI" id="CHEBI:57453"/>
    </ligand>
</feature>
<feature type="binding site" evidence="1">
    <location>
        <begin position="121"/>
        <end position="123"/>
    </location>
    <ligand>
        <name>(6S)-5,6,7,8-tetrahydrofolate</name>
        <dbReference type="ChEBI" id="CHEBI:57453"/>
    </ligand>
</feature>
<feature type="site" description="Plays an important role in substrate specificity" evidence="1">
    <location>
        <position position="225"/>
    </location>
</feature>
<feature type="modified residue" description="N6-(pyridoxal phosphate)lysine" evidence="1">
    <location>
        <position position="226"/>
    </location>
</feature>
<comment type="function">
    <text evidence="1">Catalyzes the reversible interconversion of serine and glycine with tetrahydrofolate (THF) serving as the one-carbon carrier. This reaction serves as the major source of one-carbon groups required for the biosynthesis of purines, thymidylate, methionine, and other important biomolecules. Also exhibits THF-independent aldolase activity toward beta-hydroxyamino acids, producing glycine and aldehydes, via a retro-aldol mechanism.</text>
</comment>
<comment type="catalytic activity">
    <reaction evidence="1">
        <text>(6R)-5,10-methylene-5,6,7,8-tetrahydrofolate + glycine + H2O = (6S)-5,6,7,8-tetrahydrofolate + L-serine</text>
        <dbReference type="Rhea" id="RHEA:15481"/>
        <dbReference type="ChEBI" id="CHEBI:15377"/>
        <dbReference type="ChEBI" id="CHEBI:15636"/>
        <dbReference type="ChEBI" id="CHEBI:33384"/>
        <dbReference type="ChEBI" id="CHEBI:57305"/>
        <dbReference type="ChEBI" id="CHEBI:57453"/>
        <dbReference type="EC" id="2.1.2.1"/>
    </reaction>
</comment>
<comment type="cofactor">
    <cofactor evidence="1">
        <name>pyridoxal 5'-phosphate</name>
        <dbReference type="ChEBI" id="CHEBI:597326"/>
    </cofactor>
</comment>
<comment type="pathway">
    <text evidence="1">One-carbon metabolism; tetrahydrofolate interconversion.</text>
</comment>
<comment type="pathway">
    <text evidence="1">Amino-acid biosynthesis; glycine biosynthesis; glycine from L-serine: step 1/1.</text>
</comment>
<comment type="subunit">
    <text evidence="1">Homodimer.</text>
</comment>
<comment type="subcellular location">
    <subcellularLocation>
        <location evidence="1">Cytoplasm</location>
    </subcellularLocation>
</comment>
<comment type="similarity">
    <text evidence="1">Belongs to the SHMT family.</text>
</comment>
<accession>B5YDB7</accession>
<reference key="1">
    <citation type="journal article" date="2014" name="Genome Announc.">
        <title>Complete Genome Sequence of the Extreme Thermophile Dictyoglomus thermophilum H-6-12.</title>
        <authorList>
            <person name="Coil D.A."/>
            <person name="Badger J.H."/>
            <person name="Forberger H.C."/>
            <person name="Riggs F."/>
            <person name="Madupu R."/>
            <person name="Fedorova N."/>
            <person name="Ward N."/>
            <person name="Robb F.T."/>
            <person name="Eisen J.A."/>
        </authorList>
    </citation>
    <scope>NUCLEOTIDE SEQUENCE [LARGE SCALE GENOMIC DNA]</scope>
    <source>
        <strain>ATCC 35947 / DSM 3960 / H-6-12</strain>
    </source>
</reference>
<gene>
    <name evidence="1" type="primary">glyA</name>
    <name type="ordered locus">DICTH_0652</name>
</gene>
<keyword id="KW-0028">Amino-acid biosynthesis</keyword>
<keyword id="KW-0963">Cytoplasm</keyword>
<keyword id="KW-0554">One-carbon metabolism</keyword>
<keyword id="KW-0663">Pyridoxal phosphate</keyword>
<keyword id="KW-0808">Transferase</keyword>
<protein>
    <recommendedName>
        <fullName evidence="1">Serine hydroxymethyltransferase</fullName>
        <shortName evidence="1">SHMT</shortName>
        <shortName evidence="1">Serine methylase</shortName>
        <ecNumber evidence="1">2.1.2.1</ecNumber>
    </recommendedName>
</protein>
<evidence type="ECO:0000255" key="1">
    <source>
        <dbReference type="HAMAP-Rule" id="MF_00051"/>
    </source>
</evidence>
<organism>
    <name type="scientific">Dictyoglomus thermophilum (strain ATCC 35947 / DSM 3960 / H-6-12)</name>
    <dbReference type="NCBI Taxonomy" id="309799"/>
    <lineage>
        <taxon>Bacteria</taxon>
        <taxon>Pseudomonadati</taxon>
        <taxon>Dictyoglomota</taxon>
        <taxon>Dictyoglomia</taxon>
        <taxon>Dictyoglomales</taxon>
        <taxon>Dictyoglomaceae</taxon>
        <taxon>Dictyoglomus</taxon>
    </lineage>
</organism>
<sequence>MRYLPEVDPEIYEAIKSEEYREEYHLELIASENFVSRAVLEAQGSVLTNKYAEGYPGKRYYGGCMYVDKVEDIARERVKTIYGAEHANVQPHSGSQANMAVYFVVLNPGDNVLGMNLAHGGHLTHGSPVNFSGKLYNFYFYGVDRDTEMINYDSVWNLAKEVKPKLIVAGASAYPRIIDFEKFAQIAEDVGAYFMVDMAHIAGLVAAGLHPSPVPYAHFVTSTTHKTLRGPRGGFILCKKEFAKEIDKAVFPGIQGGPLMHVIAAKAVAFKEAMTPEFKEYQKQIILNAKAMAEELMRLGYRLVSGGTDNHLMLVDLRDKGITGKEAEKALEEAGITVNKNAIPFDPQPPTVTSGIRIGTPALTTRGMKEDEMRYVARLIHEVLSNFKDSKVKEKVKKEVEELCKQFPIYRKEN</sequence>
<dbReference type="EC" id="2.1.2.1" evidence="1"/>
<dbReference type="EMBL" id="CP001146">
    <property type="protein sequence ID" value="ACI19421.1"/>
    <property type="molecule type" value="Genomic_DNA"/>
</dbReference>
<dbReference type="RefSeq" id="WP_012548053.1">
    <property type="nucleotide sequence ID" value="NC_011297.1"/>
</dbReference>
<dbReference type="SMR" id="B5YDB7"/>
<dbReference type="STRING" id="309799.DICTH_0652"/>
<dbReference type="PaxDb" id="309799-DICTH_0652"/>
<dbReference type="KEGG" id="dth:DICTH_0652"/>
<dbReference type="eggNOG" id="COG0112">
    <property type="taxonomic scope" value="Bacteria"/>
</dbReference>
<dbReference type="HOGENOM" id="CLU_022477_2_1_0"/>
<dbReference type="OrthoDB" id="9803846at2"/>
<dbReference type="UniPathway" id="UPA00193"/>
<dbReference type="UniPathway" id="UPA00288">
    <property type="reaction ID" value="UER01023"/>
</dbReference>
<dbReference type="Proteomes" id="UP000001733">
    <property type="component" value="Chromosome"/>
</dbReference>
<dbReference type="GO" id="GO:0005829">
    <property type="term" value="C:cytosol"/>
    <property type="evidence" value="ECO:0007669"/>
    <property type="project" value="TreeGrafter"/>
</dbReference>
<dbReference type="GO" id="GO:0004372">
    <property type="term" value="F:glycine hydroxymethyltransferase activity"/>
    <property type="evidence" value="ECO:0007669"/>
    <property type="project" value="UniProtKB-UniRule"/>
</dbReference>
<dbReference type="GO" id="GO:0030170">
    <property type="term" value="F:pyridoxal phosphate binding"/>
    <property type="evidence" value="ECO:0007669"/>
    <property type="project" value="UniProtKB-UniRule"/>
</dbReference>
<dbReference type="GO" id="GO:0019264">
    <property type="term" value="P:glycine biosynthetic process from serine"/>
    <property type="evidence" value="ECO:0007669"/>
    <property type="project" value="UniProtKB-UniRule"/>
</dbReference>
<dbReference type="GO" id="GO:0035999">
    <property type="term" value="P:tetrahydrofolate interconversion"/>
    <property type="evidence" value="ECO:0007669"/>
    <property type="project" value="UniProtKB-UniRule"/>
</dbReference>
<dbReference type="CDD" id="cd00378">
    <property type="entry name" value="SHMT"/>
    <property type="match status" value="1"/>
</dbReference>
<dbReference type="FunFam" id="3.40.640.10:FF:000001">
    <property type="entry name" value="Serine hydroxymethyltransferase"/>
    <property type="match status" value="1"/>
</dbReference>
<dbReference type="FunFam" id="3.90.1150.10:FF:000003">
    <property type="entry name" value="Serine hydroxymethyltransferase"/>
    <property type="match status" value="1"/>
</dbReference>
<dbReference type="Gene3D" id="3.90.1150.10">
    <property type="entry name" value="Aspartate Aminotransferase, domain 1"/>
    <property type="match status" value="1"/>
</dbReference>
<dbReference type="Gene3D" id="3.40.640.10">
    <property type="entry name" value="Type I PLP-dependent aspartate aminotransferase-like (Major domain)"/>
    <property type="match status" value="1"/>
</dbReference>
<dbReference type="HAMAP" id="MF_00051">
    <property type="entry name" value="SHMT"/>
    <property type="match status" value="1"/>
</dbReference>
<dbReference type="InterPro" id="IPR015424">
    <property type="entry name" value="PyrdxlP-dep_Trfase"/>
</dbReference>
<dbReference type="InterPro" id="IPR015421">
    <property type="entry name" value="PyrdxlP-dep_Trfase_major"/>
</dbReference>
<dbReference type="InterPro" id="IPR015422">
    <property type="entry name" value="PyrdxlP-dep_Trfase_small"/>
</dbReference>
<dbReference type="InterPro" id="IPR001085">
    <property type="entry name" value="Ser_HO-MeTrfase"/>
</dbReference>
<dbReference type="InterPro" id="IPR049943">
    <property type="entry name" value="Ser_HO-MeTrfase-like"/>
</dbReference>
<dbReference type="InterPro" id="IPR019798">
    <property type="entry name" value="Ser_HO-MeTrfase_PLP_BS"/>
</dbReference>
<dbReference type="InterPro" id="IPR039429">
    <property type="entry name" value="SHMT-like_dom"/>
</dbReference>
<dbReference type="NCBIfam" id="NF000586">
    <property type="entry name" value="PRK00011.1"/>
    <property type="match status" value="1"/>
</dbReference>
<dbReference type="PANTHER" id="PTHR11680">
    <property type="entry name" value="SERINE HYDROXYMETHYLTRANSFERASE"/>
    <property type="match status" value="1"/>
</dbReference>
<dbReference type="PANTHER" id="PTHR11680:SF35">
    <property type="entry name" value="SERINE HYDROXYMETHYLTRANSFERASE 1"/>
    <property type="match status" value="1"/>
</dbReference>
<dbReference type="Pfam" id="PF00464">
    <property type="entry name" value="SHMT"/>
    <property type="match status" value="1"/>
</dbReference>
<dbReference type="PIRSF" id="PIRSF000412">
    <property type="entry name" value="SHMT"/>
    <property type="match status" value="1"/>
</dbReference>
<dbReference type="SUPFAM" id="SSF53383">
    <property type="entry name" value="PLP-dependent transferases"/>
    <property type="match status" value="1"/>
</dbReference>
<dbReference type="PROSITE" id="PS00096">
    <property type="entry name" value="SHMT"/>
    <property type="match status" value="1"/>
</dbReference>
<proteinExistence type="inferred from homology"/>